<dbReference type="EMBL" id="CP001488">
    <property type="protein sequence ID" value="ACO01870.1"/>
    <property type="molecule type" value="Genomic_DNA"/>
</dbReference>
<dbReference type="RefSeq" id="WP_004684583.1">
    <property type="nucleotide sequence ID" value="NC_012441.1"/>
</dbReference>
<dbReference type="SMR" id="C0RG48"/>
<dbReference type="GeneID" id="29594850"/>
<dbReference type="KEGG" id="bmi:BMEA_A2226"/>
<dbReference type="HOGENOM" id="CLU_089475_1_0_5"/>
<dbReference type="Proteomes" id="UP000001748">
    <property type="component" value="Chromosome I"/>
</dbReference>
<dbReference type="GO" id="GO:0005829">
    <property type="term" value="C:cytosol"/>
    <property type="evidence" value="ECO:0007669"/>
    <property type="project" value="TreeGrafter"/>
</dbReference>
<dbReference type="GO" id="GO:0043024">
    <property type="term" value="F:ribosomal small subunit binding"/>
    <property type="evidence" value="ECO:0007669"/>
    <property type="project" value="TreeGrafter"/>
</dbReference>
<dbReference type="GO" id="GO:0030490">
    <property type="term" value="P:maturation of SSU-rRNA"/>
    <property type="evidence" value="ECO:0007669"/>
    <property type="project" value="UniProtKB-UniRule"/>
</dbReference>
<dbReference type="Gene3D" id="3.30.300.20">
    <property type="match status" value="1"/>
</dbReference>
<dbReference type="HAMAP" id="MF_00003">
    <property type="entry name" value="RbfA"/>
    <property type="match status" value="1"/>
</dbReference>
<dbReference type="InterPro" id="IPR015946">
    <property type="entry name" value="KH_dom-like_a/b"/>
</dbReference>
<dbReference type="InterPro" id="IPR000238">
    <property type="entry name" value="RbfA"/>
</dbReference>
<dbReference type="InterPro" id="IPR023799">
    <property type="entry name" value="RbfA_dom_sf"/>
</dbReference>
<dbReference type="InterPro" id="IPR020053">
    <property type="entry name" value="Ribosome-bd_factorA_CS"/>
</dbReference>
<dbReference type="NCBIfam" id="NF001802">
    <property type="entry name" value="PRK00521.2-5"/>
    <property type="match status" value="1"/>
</dbReference>
<dbReference type="NCBIfam" id="TIGR00082">
    <property type="entry name" value="rbfA"/>
    <property type="match status" value="1"/>
</dbReference>
<dbReference type="PANTHER" id="PTHR33515">
    <property type="entry name" value="RIBOSOME-BINDING FACTOR A, CHLOROPLASTIC-RELATED"/>
    <property type="match status" value="1"/>
</dbReference>
<dbReference type="PANTHER" id="PTHR33515:SF1">
    <property type="entry name" value="RIBOSOME-BINDING FACTOR A, CHLOROPLASTIC-RELATED"/>
    <property type="match status" value="1"/>
</dbReference>
<dbReference type="Pfam" id="PF02033">
    <property type="entry name" value="RBFA"/>
    <property type="match status" value="1"/>
</dbReference>
<dbReference type="SUPFAM" id="SSF89919">
    <property type="entry name" value="Ribosome-binding factor A, RbfA"/>
    <property type="match status" value="1"/>
</dbReference>
<dbReference type="PROSITE" id="PS01319">
    <property type="entry name" value="RBFA"/>
    <property type="match status" value="1"/>
</dbReference>
<comment type="function">
    <text evidence="1">One of several proteins that assist in the late maturation steps of the functional core of the 30S ribosomal subunit. Associates with free 30S ribosomal subunits (but not with 30S subunits that are part of 70S ribosomes or polysomes). Required for efficient processing of 16S rRNA. May interact with the 5'-terminal helix region of 16S rRNA.</text>
</comment>
<comment type="subunit">
    <text evidence="1">Monomer. Binds 30S ribosomal subunits, but not 50S ribosomal subunits or 70S ribosomes.</text>
</comment>
<comment type="subcellular location">
    <subcellularLocation>
        <location evidence="1">Cytoplasm</location>
    </subcellularLocation>
</comment>
<comment type="similarity">
    <text evidence="1">Belongs to the RbfA family.</text>
</comment>
<keyword id="KW-0963">Cytoplasm</keyword>
<keyword id="KW-0690">Ribosome biogenesis</keyword>
<reference key="1">
    <citation type="submission" date="2009-03" db="EMBL/GenBank/DDBJ databases">
        <title>Brucella melitensis ATCC 23457 whole genome shotgun sequencing project.</title>
        <authorList>
            <person name="Setubal J.C."/>
            <person name="Boyle S."/>
            <person name="Crasta O.R."/>
            <person name="Gillespie J.J."/>
            <person name="Kenyon R.W."/>
            <person name="Lu J."/>
            <person name="Mane S."/>
            <person name="Nagrani S."/>
            <person name="Shallom J.M."/>
            <person name="Shallom S."/>
            <person name="Shukla M."/>
            <person name="Snyder E.E."/>
            <person name="Sobral B.W."/>
            <person name="Wattam A.R."/>
            <person name="Will R."/>
            <person name="Williams K."/>
            <person name="Yoo H."/>
            <person name="Munk C."/>
            <person name="Tapia R."/>
            <person name="Han C."/>
            <person name="Detter J.C."/>
            <person name="Bruce D."/>
            <person name="Brettin T.S."/>
        </authorList>
    </citation>
    <scope>NUCLEOTIDE SEQUENCE [LARGE SCALE GENOMIC DNA]</scope>
    <source>
        <strain>ATCC 23457</strain>
    </source>
</reference>
<accession>C0RG48</accession>
<proteinExistence type="inferred from homology"/>
<feature type="chain" id="PRO_1000193236" description="Ribosome-binding factor A">
    <location>
        <begin position="1"/>
        <end position="150"/>
    </location>
</feature>
<feature type="region of interest" description="Disordered" evidence="2">
    <location>
        <begin position="131"/>
        <end position="150"/>
    </location>
</feature>
<gene>
    <name evidence="1" type="primary">rbfA</name>
    <name type="ordered locus">BMEA_A2226</name>
</gene>
<sequence length="150" mass="16633">MARSHDTKGSGGLSQRQLRVGEQVRHALAQVLQRGEIRDDLIERTVISVSEVRMSPDLKIATCFITPLGSADPQAVIKALASHAKFIRGRVAPSLAQMKYMPEFRFRPDTSFDNFSKIDALLRFPEVARDLSHDDDEDGGADEAPRNGDE</sequence>
<protein>
    <recommendedName>
        <fullName evidence="1">Ribosome-binding factor A</fullName>
    </recommendedName>
</protein>
<organism>
    <name type="scientific">Brucella melitensis biotype 2 (strain ATCC 23457)</name>
    <dbReference type="NCBI Taxonomy" id="546272"/>
    <lineage>
        <taxon>Bacteria</taxon>
        <taxon>Pseudomonadati</taxon>
        <taxon>Pseudomonadota</taxon>
        <taxon>Alphaproteobacteria</taxon>
        <taxon>Hyphomicrobiales</taxon>
        <taxon>Brucellaceae</taxon>
        <taxon>Brucella/Ochrobactrum group</taxon>
        <taxon>Brucella</taxon>
    </lineage>
</organism>
<name>RBFA_BRUMB</name>
<evidence type="ECO:0000255" key="1">
    <source>
        <dbReference type="HAMAP-Rule" id="MF_00003"/>
    </source>
</evidence>
<evidence type="ECO:0000256" key="2">
    <source>
        <dbReference type="SAM" id="MobiDB-lite"/>
    </source>
</evidence>